<comment type="function">
    <text evidence="1">An aminoacyl-tRNA editing enzyme that deacylates mischarged D-aminoacyl-tRNAs. Also deacylates mischarged glycyl-tRNA(Ala), protecting cells against glycine mischarging by AlaRS. Acts via tRNA-based rather than protein-based catalysis; rejects L-amino acids rather than detecting D-amino acids in the active site. By recycling D-aminoacyl-tRNA to D-amino acids and free tRNA molecules, this enzyme counteracts the toxicity associated with the formation of D-aminoacyl-tRNA entities in vivo and helps enforce protein L-homochirality.</text>
</comment>
<comment type="catalytic activity">
    <reaction evidence="1">
        <text>glycyl-tRNA(Ala) + H2O = tRNA(Ala) + glycine + H(+)</text>
        <dbReference type="Rhea" id="RHEA:53744"/>
        <dbReference type="Rhea" id="RHEA-COMP:9657"/>
        <dbReference type="Rhea" id="RHEA-COMP:13640"/>
        <dbReference type="ChEBI" id="CHEBI:15377"/>
        <dbReference type="ChEBI" id="CHEBI:15378"/>
        <dbReference type="ChEBI" id="CHEBI:57305"/>
        <dbReference type="ChEBI" id="CHEBI:78442"/>
        <dbReference type="ChEBI" id="CHEBI:78522"/>
        <dbReference type="EC" id="3.1.1.96"/>
    </reaction>
</comment>
<comment type="catalytic activity">
    <reaction evidence="1">
        <text>a D-aminoacyl-tRNA + H2O = a tRNA + a D-alpha-amino acid + H(+)</text>
        <dbReference type="Rhea" id="RHEA:13953"/>
        <dbReference type="Rhea" id="RHEA-COMP:10123"/>
        <dbReference type="Rhea" id="RHEA-COMP:10124"/>
        <dbReference type="ChEBI" id="CHEBI:15377"/>
        <dbReference type="ChEBI" id="CHEBI:15378"/>
        <dbReference type="ChEBI" id="CHEBI:59871"/>
        <dbReference type="ChEBI" id="CHEBI:78442"/>
        <dbReference type="ChEBI" id="CHEBI:79333"/>
        <dbReference type="EC" id="3.1.1.96"/>
    </reaction>
</comment>
<comment type="subunit">
    <text evidence="1">Homodimer.</text>
</comment>
<comment type="subcellular location">
    <subcellularLocation>
        <location evidence="1">Cytoplasm</location>
    </subcellularLocation>
</comment>
<comment type="domain">
    <text evidence="1">A Gly-cisPro motif from one monomer fits into the active site of the other monomer to allow specific chiral rejection of L-amino acids.</text>
</comment>
<comment type="similarity">
    <text evidence="1">Belongs to the DTD family.</text>
</comment>
<accession>C4LJ12</accession>
<reference key="1">
    <citation type="journal article" date="2008" name="J. Biotechnol.">
        <title>Ultrafast pyrosequencing of Corynebacterium kroppenstedtii DSM44385 revealed insights into the physiology of a lipophilic corynebacterium that lacks mycolic acids.</title>
        <authorList>
            <person name="Tauch A."/>
            <person name="Schneider J."/>
            <person name="Szczepanowski R."/>
            <person name="Tilker A."/>
            <person name="Viehoever P."/>
            <person name="Gartemann K.-H."/>
            <person name="Arnold W."/>
            <person name="Blom J."/>
            <person name="Brinkrolf K."/>
            <person name="Brune I."/>
            <person name="Goetker S."/>
            <person name="Weisshaar B."/>
            <person name="Goesmann A."/>
            <person name="Droege M."/>
            <person name="Puehler A."/>
        </authorList>
    </citation>
    <scope>NUCLEOTIDE SEQUENCE [LARGE SCALE GENOMIC DNA]</scope>
    <source>
        <strain>DSM 44385 / JCM 11950 / CIP 105744 / CCUG 35717</strain>
    </source>
</reference>
<keyword id="KW-0963">Cytoplasm</keyword>
<keyword id="KW-0378">Hydrolase</keyword>
<keyword id="KW-1185">Reference proteome</keyword>
<keyword id="KW-0694">RNA-binding</keyword>
<keyword id="KW-0820">tRNA-binding</keyword>
<protein>
    <recommendedName>
        <fullName evidence="1">D-aminoacyl-tRNA deacylase</fullName>
        <shortName evidence="1">DTD</shortName>
        <ecNumber evidence="1">3.1.1.96</ecNumber>
    </recommendedName>
    <alternativeName>
        <fullName evidence="1">Gly-tRNA(Ala) deacylase</fullName>
    </alternativeName>
</protein>
<organism>
    <name type="scientific">Corynebacterium kroppenstedtii (strain DSM 44385 / JCM 11950 / CIP 105744 / CCUG 35717)</name>
    <dbReference type="NCBI Taxonomy" id="645127"/>
    <lineage>
        <taxon>Bacteria</taxon>
        <taxon>Bacillati</taxon>
        <taxon>Actinomycetota</taxon>
        <taxon>Actinomycetes</taxon>
        <taxon>Mycobacteriales</taxon>
        <taxon>Corynebacteriaceae</taxon>
        <taxon>Corynebacterium</taxon>
    </lineage>
</organism>
<evidence type="ECO:0000255" key="1">
    <source>
        <dbReference type="HAMAP-Rule" id="MF_00518"/>
    </source>
</evidence>
<name>DTD_CORK4</name>
<gene>
    <name evidence="1" type="primary">dtd</name>
    <name type="ordered locus">ckrop_1066</name>
</gene>
<dbReference type="EC" id="3.1.1.96" evidence="1"/>
<dbReference type="EMBL" id="CP001620">
    <property type="protein sequence ID" value="ACR17817.1"/>
    <property type="molecule type" value="Genomic_DNA"/>
</dbReference>
<dbReference type="RefSeq" id="WP_012731704.1">
    <property type="nucleotide sequence ID" value="NC_012704.1"/>
</dbReference>
<dbReference type="SMR" id="C4LJ12"/>
<dbReference type="STRING" id="645127.ckrop_1066"/>
<dbReference type="KEGG" id="ckp:ckrop_1066"/>
<dbReference type="eggNOG" id="COG1490">
    <property type="taxonomic scope" value="Bacteria"/>
</dbReference>
<dbReference type="HOGENOM" id="CLU_076901_1_0_11"/>
<dbReference type="OrthoDB" id="9801395at2"/>
<dbReference type="Proteomes" id="UP000001473">
    <property type="component" value="Chromosome"/>
</dbReference>
<dbReference type="GO" id="GO:0005737">
    <property type="term" value="C:cytoplasm"/>
    <property type="evidence" value="ECO:0007669"/>
    <property type="project" value="UniProtKB-SubCell"/>
</dbReference>
<dbReference type="GO" id="GO:0051500">
    <property type="term" value="F:D-tyrosyl-tRNA(Tyr) deacylase activity"/>
    <property type="evidence" value="ECO:0007669"/>
    <property type="project" value="TreeGrafter"/>
</dbReference>
<dbReference type="GO" id="GO:0106026">
    <property type="term" value="F:Gly-tRNA(Ala) deacylase activity"/>
    <property type="evidence" value="ECO:0007669"/>
    <property type="project" value="UniProtKB-UniRule"/>
</dbReference>
<dbReference type="GO" id="GO:0043908">
    <property type="term" value="F:Ser(Gly)-tRNA(Ala) hydrolase activity"/>
    <property type="evidence" value="ECO:0007669"/>
    <property type="project" value="UniProtKB-UniRule"/>
</dbReference>
<dbReference type="GO" id="GO:0000049">
    <property type="term" value="F:tRNA binding"/>
    <property type="evidence" value="ECO:0007669"/>
    <property type="project" value="UniProtKB-UniRule"/>
</dbReference>
<dbReference type="GO" id="GO:0019478">
    <property type="term" value="P:D-amino acid catabolic process"/>
    <property type="evidence" value="ECO:0007669"/>
    <property type="project" value="UniProtKB-UniRule"/>
</dbReference>
<dbReference type="FunFam" id="3.50.80.10:FF:000001">
    <property type="entry name" value="D-aminoacyl-tRNA deacylase"/>
    <property type="match status" value="1"/>
</dbReference>
<dbReference type="Gene3D" id="3.50.80.10">
    <property type="entry name" value="D-tyrosyl-tRNA(Tyr) deacylase"/>
    <property type="match status" value="1"/>
</dbReference>
<dbReference type="HAMAP" id="MF_00518">
    <property type="entry name" value="Deacylase_Dtd"/>
    <property type="match status" value="1"/>
</dbReference>
<dbReference type="InterPro" id="IPR003732">
    <property type="entry name" value="Daa-tRNA_deacyls_DTD"/>
</dbReference>
<dbReference type="InterPro" id="IPR023509">
    <property type="entry name" value="DTD-like_sf"/>
</dbReference>
<dbReference type="NCBIfam" id="TIGR00256">
    <property type="entry name" value="D-aminoacyl-tRNA deacylase"/>
    <property type="match status" value="1"/>
</dbReference>
<dbReference type="PANTHER" id="PTHR10472:SF5">
    <property type="entry name" value="D-AMINOACYL-TRNA DEACYLASE 1"/>
    <property type="match status" value="1"/>
</dbReference>
<dbReference type="PANTHER" id="PTHR10472">
    <property type="entry name" value="D-TYROSYL-TRNA TYR DEACYLASE"/>
    <property type="match status" value="1"/>
</dbReference>
<dbReference type="Pfam" id="PF02580">
    <property type="entry name" value="Tyr_Deacylase"/>
    <property type="match status" value="1"/>
</dbReference>
<dbReference type="SUPFAM" id="SSF69500">
    <property type="entry name" value="DTD-like"/>
    <property type="match status" value="1"/>
</dbReference>
<feature type="chain" id="PRO_1000211722" description="D-aminoacyl-tRNA deacylase">
    <location>
        <begin position="1"/>
        <end position="158"/>
    </location>
</feature>
<feature type="short sequence motif" description="Gly-cisPro motif, important for rejection of L-amino acids" evidence="1">
    <location>
        <begin position="144"/>
        <end position="145"/>
    </location>
</feature>
<sequence>MKAVVTRVRSASVVVDDSVVGSIPDSDVGGLLVLIGVATGDTSATARAMAEKLARLRIFEGSTADGRPTEVSALDVDAPMLVVSQFTLMGDTSHGRRPSWSAAAKPAEAEPIFNACVEELRDRGLSVDTGVFGAYMAVESVNDGPFTVLVDIPSGDRS</sequence>
<proteinExistence type="inferred from homology"/>